<name>PSBB_CRUWA</name>
<gene>
    <name evidence="1" type="primary">psbB</name>
</gene>
<keyword id="KW-0148">Chlorophyll</keyword>
<keyword id="KW-0150">Chloroplast</keyword>
<keyword id="KW-0157">Chromophore</keyword>
<keyword id="KW-0472">Membrane</keyword>
<keyword id="KW-0602">Photosynthesis</keyword>
<keyword id="KW-0604">Photosystem II</keyword>
<keyword id="KW-0934">Plastid</keyword>
<keyword id="KW-0793">Thylakoid</keyword>
<keyword id="KW-0812">Transmembrane</keyword>
<keyword id="KW-1133">Transmembrane helix</keyword>
<comment type="function">
    <text evidence="1">One of the components of the core complex of photosystem II (PSII). It binds chlorophyll and helps catalyze the primary light-induced photochemical processes of PSII. PSII is a light-driven water:plastoquinone oxidoreductase, using light energy to abstract electrons from H(2)O, generating O(2) and a proton gradient subsequently used for ATP formation.</text>
</comment>
<comment type="cofactor">
    <text evidence="1">Binds multiple chlorophylls. PSII binds additional chlorophylls, carotenoids and specific lipids.</text>
</comment>
<comment type="subunit">
    <text evidence="1">PSII is composed of 1 copy each of membrane proteins PsbA, PsbB, PsbC, PsbD, PsbE, PsbF, PsbH, PsbI, PsbJ, PsbK, PsbL, PsbM, PsbT, PsbX, PsbY, PsbZ, Psb30/Ycf12, at least 3 peripheral proteins of the oxygen-evolving complex and a large number of cofactors. It forms dimeric complexes.</text>
</comment>
<comment type="subcellular location">
    <subcellularLocation>
        <location evidence="1">Plastid</location>
        <location evidence="1">Chloroplast thylakoid membrane</location>
        <topology evidence="1">Multi-pass membrane protein</topology>
    </subcellularLocation>
</comment>
<comment type="similarity">
    <text evidence="1">Belongs to the PsbB/PsbC family. PsbB subfamily.</text>
</comment>
<proteinExistence type="inferred from homology"/>
<protein>
    <recommendedName>
        <fullName evidence="1">Photosystem II CP47 reaction center protein</fullName>
    </recommendedName>
    <alternativeName>
        <fullName evidence="1">PSII 47 kDa protein</fullName>
    </alternativeName>
    <alternativeName>
        <fullName evidence="1">Protein CP-47</fullName>
    </alternativeName>
</protein>
<evidence type="ECO:0000255" key="1">
    <source>
        <dbReference type="HAMAP-Rule" id="MF_01495"/>
    </source>
</evidence>
<feature type="chain" id="PRO_0000359812" description="Photosystem II CP47 reaction center protein">
    <location>
        <begin position="1"/>
        <end position="508"/>
    </location>
</feature>
<feature type="transmembrane region" description="Helical" evidence="1">
    <location>
        <begin position="21"/>
        <end position="36"/>
    </location>
</feature>
<feature type="transmembrane region" description="Helical" evidence="1">
    <location>
        <begin position="101"/>
        <end position="115"/>
    </location>
</feature>
<feature type="transmembrane region" description="Helical" evidence="1">
    <location>
        <begin position="140"/>
        <end position="156"/>
    </location>
</feature>
<feature type="transmembrane region" description="Helical" evidence="1">
    <location>
        <begin position="203"/>
        <end position="218"/>
    </location>
</feature>
<feature type="transmembrane region" description="Helical" evidence="1">
    <location>
        <begin position="237"/>
        <end position="252"/>
    </location>
</feature>
<feature type="transmembrane region" description="Helical" evidence="1">
    <location>
        <begin position="457"/>
        <end position="472"/>
    </location>
</feature>
<sequence>MGLPWYRVHTVVLNDPGRLLSVHIMHTALVAGWAGSMALYELAVFDPSDPVLDPMWRQGMFVIPFMTRLGITNSWGGWNITGGTITNPGLWSYEGVAGAHIVFSGLCFLAAIWHWVYWDLEIFCDERTGKPSLDLPKIFGIHLFLSGVACFGFGAFHVTGLYGPGIWVSDPYGLTGKVQPVNPAWGVEGFDPFVPGGIASHHIAAGTLGILAGLFHLSVRPPQRLYKGLRMGNIETVLSSSIAAVFFAAFVVAGTMWYGSATTPIELFGPTRYQWDQGYFQQEIYRRVSAGLAENQSLSEAWSKIPEKLAFYDYIGNNPAKGGLFRAGSMDNGDGIAVGWLGHPVFRNKEGRELFVRRMPTFFETFPVVLVDGDGIVRADVPFRRAESKYSVEQVGVTVEFYGGELNGVSYSDPATVKKYARRAQLGEIFELDRATLKSDGVFRSSPRGWFTFGHASFALLFFFGHIWHGARTLFRDVFAGIDPDLDAQVEFGAFQKLGDPTTKRQAV</sequence>
<accession>A4QKV7</accession>
<dbReference type="EMBL" id="AP009372">
    <property type="protein sequence ID" value="BAF50312.1"/>
    <property type="molecule type" value="Genomic_DNA"/>
</dbReference>
<dbReference type="RefSeq" id="YP_001123488.1">
    <property type="nucleotide sequence ID" value="NC_009271.1"/>
</dbReference>
<dbReference type="SMR" id="A4QKV7"/>
<dbReference type="GeneID" id="4962666"/>
<dbReference type="GO" id="GO:0009535">
    <property type="term" value="C:chloroplast thylakoid membrane"/>
    <property type="evidence" value="ECO:0007669"/>
    <property type="project" value="UniProtKB-SubCell"/>
</dbReference>
<dbReference type="GO" id="GO:0009523">
    <property type="term" value="C:photosystem II"/>
    <property type="evidence" value="ECO:0007669"/>
    <property type="project" value="UniProtKB-KW"/>
</dbReference>
<dbReference type="GO" id="GO:0016168">
    <property type="term" value="F:chlorophyll binding"/>
    <property type="evidence" value="ECO:0007669"/>
    <property type="project" value="UniProtKB-UniRule"/>
</dbReference>
<dbReference type="GO" id="GO:0045156">
    <property type="term" value="F:electron transporter, transferring electrons within the cyclic electron transport pathway of photosynthesis activity"/>
    <property type="evidence" value="ECO:0007669"/>
    <property type="project" value="InterPro"/>
</dbReference>
<dbReference type="GO" id="GO:0009772">
    <property type="term" value="P:photosynthetic electron transport in photosystem II"/>
    <property type="evidence" value="ECO:0007669"/>
    <property type="project" value="InterPro"/>
</dbReference>
<dbReference type="FunFam" id="3.10.680.10:FF:000001">
    <property type="entry name" value="Photosystem II CP47 reaction center protein"/>
    <property type="match status" value="1"/>
</dbReference>
<dbReference type="Gene3D" id="3.10.680.10">
    <property type="entry name" value="Photosystem II CP47 reaction center protein"/>
    <property type="match status" value="1"/>
</dbReference>
<dbReference type="HAMAP" id="MF_01495">
    <property type="entry name" value="PSII_PsbB_CP47"/>
    <property type="match status" value="1"/>
</dbReference>
<dbReference type="InterPro" id="IPR000932">
    <property type="entry name" value="PS_antenna-like"/>
</dbReference>
<dbReference type="InterPro" id="IPR036001">
    <property type="entry name" value="PS_II_antenna-like_sf"/>
</dbReference>
<dbReference type="InterPro" id="IPR017486">
    <property type="entry name" value="PSII_PsbB"/>
</dbReference>
<dbReference type="NCBIfam" id="TIGR03039">
    <property type="entry name" value="PS_II_CP47"/>
    <property type="match status" value="1"/>
</dbReference>
<dbReference type="PANTHER" id="PTHR33180">
    <property type="entry name" value="PHOTOSYSTEM II CP43 REACTION CENTER PROTEIN"/>
    <property type="match status" value="1"/>
</dbReference>
<dbReference type="PANTHER" id="PTHR33180:SF38">
    <property type="entry name" value="PHOTOSYSTEM II CP47 REACTION CENTER PROTEIN"/>
    <property type="match status" value="1"/>
</dbReference>
<dbReference type="Pfam" id="PF00421">
    <property type="entry name" value="PSII"/>
    <property type="match status" value="1"/>
</dbReference>
<dbReference type="SUPFAM" id="SSF161077">
    <property type="entry name" value="Photosystem II antenna protein-like"/>
    <property type="match status" value="1"/>
</dbReference>
<organism>
    <name type="scientific">Crucihimalaya wallichii</name>
    <name type="common">Rock-cress</name>
    <name type="synonym">Arabidopsis campestris</name>
    <dbReference type="NCBI Taxonomy" id="78192"/>
    <lineage>
        <taxon>Eukaryota</taxon>
        <taxon>Viridiplantae</taxon>
        <taxon>Streptophyta</taxon>
        <taxon>Embryophyta</taxon>
        <taxon>Tracheophyta</taxon>
        <taxon>Spermatophyta</taxon>
        <taxon>Magnoliopsida</taxon>
        <taxon>eudicotyledons</taxon>
        <taxon>Gunneridae</taxon>
        <taxon>Pentapetalae</taxon>
        <taxon>rosids</taxon>
        <taxon>malvids</taxon>
        <taxon>Brassicales</taxon>
        <taxon>Brassicaceae</taxon>
        <taxon>Crucihimalayeae</taxon>
        <taxon>Crucihimalaya</taxon>
    </lineage>
</organism>
<reference key="1">
    <citation type="submission" date="2007-03" db="EMBL/GenBank/DDBJ databases">
        <title>Sequencing analysis of Crucihimalaya wallichii chloroplast DNA.</title>
        <authorList>
            <person name="Hosouchi T."/>
            <person name="Tsuruoka H."/>
            <person name="Kotani H."/>
        </authorList>
    </citation>
    <scope>NUCLEOTIDE SEQUENCE [LARGE SCALE GENOMIC DNA]</scope>
</reference>
<geneLocation type="chloroplast"/>